<keyword id="KW-0030">Aminoacyl-tRNA synthetase</keyword>
<keyword id="KW-0067">ATP-binding</keyword>
<keyword id="KW-0963">Cytoplasm</keyword>
<keyword id="KW-0436">Ligase</keyword>
<keyword id="KW-0547">Nucleotide-binding</keyword>
<keyword id="KW-0648">Protein biosynthesis</keyword>
<protein>
    <recommendedName>
        <fullName evidence="1">Arginine--tRNA ligase</fullName>
        <ecNumber evidence="1">6.1.1.19</ecNumber>
    </recommendedName>
    <alternativeName>
        <fullName evidence="1">Arginyl-tRNA synthetase</fullName>
        <shortName evidence="1">ArgRS</shortName>
    </alternativeName>
</protein>
<proteinExistence type="inferred from homology"/>
<sequence>MLPAHKQTLEALLADSVTQVAHALKGADAAFVAPAITLERPKVAAHGDVACNVAMQLAKPLGTNPRQLAEKIVAALTAQPAAQGLVDAADIAGPGFINLRLTAAAKQAVIAAVFEQGRAFGTSDREKGKQVLLEFVSANPTGPLHVGHGRQAALGDVLANVIASQGYAVHREFYYNDAGVQIGNLAISTQARARGLKPGDAGWPEAAYNGEYIADIARDYLNRETVAAKDGEPVTGAGDIDDLDAIRKFAVAYLRHEQDMDLQAFGVKFDQYYLESSLYSEGRVEKTVDALVKAGMTYEQDGALWLRTTDEGDDKDRVMRKSDGTYTYFVPDVAYHVTKWERGFTQVINIQGSDHHGTIARVRAGLQGLHVGIPKGYPDYVLHKMVTVMRDGQEVKLSKRAGSYVTVRDLIEWSGGAAPGQEAAPDLIDEATITRGRDAVRFFLISRKADTEFVFDIDLALKQNDENPVYYVQYAHARICSVLNELKSRYNVDVAQLPGADLSQLTSAQAVSLMQKLAEYPDMLTHAAKELAPHAVAFYLRDLAGEFHSFYNAERVLVDDEAPRNARAALLAATRQVLENGLAVLGVSAPAKM</sequence>
<evidence type="ECO:0000255" key="1">
    <source>
        <dbReference type="HAMAP-Rule" id="MF_00123"/>
    </source>
</evidence>
<name>SYR_BURCM</name>
<dbReference type="EC" id="6.1.1.19" evidence="1"/>
<dbReference type="EMBL" id="CP000440">
    <property type="protein sequence ID" value="ABI88524.1"/>
    <property type="molecule type" value="Genomic_DNA"/>
</dbReference>
<dbReference type="RefSeq" id="WP_011658056.1">
    <property type="nucleotide sequence ID" value="NC_008390.1"/>
</dbReference>
<dbReference type="SMR" id="Q0BBE9"/>
<dbReference type="GeneID" id="93084830"/>
<dbReference type="KEGG" id="bam:Bamb_2968"/>
<dbReference type="PATRIC" id="fig|339670.21.peg.1910"/>
<dbReference type="eggNOG" id="COG0018">
    <property type="taxonomic scope" value="Bacteria"/>
</dbReference>
<dbReference type="Proteomes" id="UP000000662">
    <property type="component" value="Chromosome 1"/>
</dbReference>
<dbReference type="GO" id="GO:0005737">
    <property type="term" value="C:cytoplasm"/>
    <property type="evidence" value="ECO:0007669"/>
    <property type="project" value="UniProtKB-SubCell"/>
</dbReference>
<dbReference type="GO" id="GO:0004814">
    <property type="term" value="F:arginine-tRNA ligase activity"/>
    <property type="evidence" value="ECO:0007669"/>
    <property type="project" value="UniProtKB-UniRule"/>
</dbReference>
<dbReference type="GO" id="GO:0005524">
    <property type="term" value="F:ATP binding"/>
    <property type="evidence" value="ECO:0007669"/>
    <property type="project" value="UniProtKB-UniRule"/>
</dbReference>
<dbReference type="GO" id="GO:0006420">
    <property type="term" value="P:arginyl-tRNA aminoacylation"/>
    <property type="evidence" value="ECO:0007669"/>
    <property type="project" value="UniProtKB-UniRule"/>
</dbReference>
<dbReference type="CDD" id="cd00671">
    <property type="entry name" value="ArgRS_core"/>
    <property type="match status" value="1"/>
</dbReference>
<dbReference type="FunFam" id="1.10.730.10:FF:000008">
    <property type="entry name" value="Arginine--tRNA ligase"/>
    <property type="match status" value="1"/>
</dbReference>
<dbReference type="FunFam" id="3.40.50.620:FF:000062">
    <property type="entry name" value="Arginine--tRNA ligase"/>
    <property type="match status" value="1"/>
</dbReference>
<dbReference type="Gene3D" id="3.30.1360.70">
    <property type="entry name" value="Arginyl tRNA synthetase N-terminal domain"/>
    <property type="match status" value="1"/>
</dbReference>
<dbReference type="Gene3D" id="3.40.50.620">
    <property type="entry name" value="HUPs"/>
    <property type="match status" value="1"/>
</dbReference>
<dbReference type="Gene3D" id="1.10.730.10">
    <property type="entry name" value="Isoleucyl-tRNA Synthetase, Domain 1"/>
    <property type="match status" value="1"/>
</dbReference>
<dbReference type="HAMAP" id="MF_00123">
    <property type="entry name" value="Arg_tRNA_synth"/>
    <property type="match status" value="1"/>
</dbReference>
<dbReference type="InterPro" id="IPR001412">
    <property type="entry name" value="aa-tRNA-synth_I_CS"/>
</dbReference>
<dbReference type="InterPro" id="IPR001278">
    <property type="entry name" value="Arg-tRNA-ligase"/>
</dbReference>
<dbReference type="InterPro" id="IPR005148">
    <property type="entry name" value="Arg-tRNA-synth_N"/>
</dbReference>
<dbReference type="InterPro" id="IPR036695">
    <property type="entry name" value="Arg-tRNA-synth_N_sf"/>
</dbReference>
<dbReference type="InterPro" id="IPR035684">
    <property type="entry name" value="ArgRS_core"/>
</dbReference>
<dbReference type="InterPro" id="IPR008909">
    <property type="entry name" value="DALR_anticod-bd"/>
</dbReference>
<dbReference type="InterPro" id="IPR014729">
    <property type="entry name" value="Rossmann-like_a/b/a_fold"/>
</dbReference>
<dbReference type="InterPro" id="IPR009080">
    <property type="entry name" value="tRNAsynth_Ia_anticodon-bd"/>
</dbReference>
<dbReference type="NCBIfam" id="TIGR00456">
    <property type="entry name" value="argS"/>
    <property type="match status" value="1"/>
</dbReference>
<dbReference type="PANTHER" id="PTHR11956:SF5">
    <property type="entry name" value="ARGININE--TRNA LIGASE, CYTOPLASMIC"/>
    <property type="match status" value="1"/>
</dbReference>
<dbReference type="PANTHER" id="PTHR11956">
    <property type="entry name" value="ARGINYL-TRNA SYNTHETASE"/>
    <property type="match status" value="1"/>
</dbReference>
<dbReference type="Pfam" id="PF03485">
    <property type="entry name" value="Arg_tRNA_synt_N"/>
    <property type="match status" value="1"/>
</dbReference>
<dbReference type="Pfam" id="PF05746">
    <property type="entry name" value="DALR_1"/>
    <property type="match status" value="1"/>
</dbReference>
<dbReference type="Pfam" id="PF00750">
    <property type="entry name" value="tRNA-synt_1d"/>
    <property type="match status" value="1"/>
</dbReference>
<dbReference type="PRINTS" id="PR01038">
    <property type="entry name" value="TRNASYNTHARG"/>
</dbReference>
<dbReference type="SMART" id="SM01016">
    <property type="entry name" value="Arg_tRNA_synt_N"/>
    <property type="match status" value="1"/>
</dbReference>
<dbReference type="SMART" id="SM00836">
    <property type="entry name" value="DALR_1"/>
    <property type="match status" value="1"/>
</dbReference>
<dbReference type="SUPFAM" id="SSF47323">
    <property type="entry name" value="Anticodon-binding domain of a subclass of class I aminoacyl-tRNA synthetases"/>
    <property type="match status" value="1"/>
</dbReference>
<dbReference type="SUPFAM" id="SSF55190">
    <property type="entry name" value="Arginyl-tRNA synthetase (ArgRS), N-terminal 'additional' domain"/>
    <property type="match status" value="1"/>
</dbReference>
<dbReference type="SUPFAM" id="SSF52374">
    <property type="entry name" value="Nucleotidylyl transferase"/>
    <property type="match status" value="1"/>
</dbReference>
<dbReference type="PROSITE" id="PS00178">
    <property type="entry name" value="AA_TRNA_LIGASE_I"/>
    <property type="match status" value="1"/>
</dbReference>
<feature type="chain" id="PRO_1000017999" description="Arginine--tRNA ligase">
    <location>
        <begin position="1"/>
        <end position="593"/>
    </location>
</feature>
<feature type="short sequence motif" description="'HIGH' region">
    <location>
        <begin position="138"/>
        <end position="148"/>
    </location>
</feature>
<comment type="catalytic activity">
    <reaction evidence="1">
        <text>tRNA(Arg) + L-arginine + ATP = L-arginyl-tRNA(Arg) + AMP + diphosphate</text>
        <dbReference type="Rhea" id="RHEA:20301"/>
        <dbReference type="Rhea" id="RHEA-COMP:9658"/>
        <dbReference type="Rhea" id="RHEA-COMP:9673"/>
        <dbReference type="ChEBI" id="CHEBI:30616"/>
        <dbReference type="ChEBI" id="CHEBI:32682"/>
        <dbReference type="ChEBI" id="CHEBI:33019"/>
        <dbReference type="ChEBI" id="CHEBI:78442"/>
        <dbReference type="ChEBI" id="CHEBI:78513"/>
        <dbReference type="ChEBI" id="CHEBI:456215"/>
        <dbReference type="EC" id="6.1.1.19"/>
    </reaction>
</comment>
<comment type="subunit">
    <text evidence="1">Monomer.</text>
</comment>
<comment type="subcellular location">
    <subcellularLocation>
        <location evidence="1">Cytoplasm</location>
    </subcellularLocation>
</comment>
<comment type="similarity">
    <text evidence="1">Belongs to the class-I aminoacyl-tRNA synthetase family.</text>
</comment>
<organism>
    <name type="scientific">Burkholderia ambifaria (strain ATCC BAA-244 / DSM 16087 / CCUG 44356 / LMG 19182 / AMMD)</name>
    <name type="common">Burkholderia cepacia (strain AMMD)</name>
    <dbReference type="NCBI Taxonomy" id="339670"/>
    <lineage>
        <taxon>Bacteria</taxon>
        <taxon>Pseudomonadati</taxon>
        <taxon>Pseudomonadota</taxon>
        <taxon>Betaproteobacteria</taxon>
        <taxon>Burkholderiales</taxon>
        <taxon>Burkholderiaceae</taxon>
        <taxon>Burkholderia</taxon>
        <taxon>Burkholderia cepacia complex</taxon>
    </lineage>
</organism>
<accession>Q0BBE9</accession>
<reference key="1">
    <citation type="submission" date="2006-08" db="EMBL/GenBank/DDBJ databases">
        <title>Complete sequence of chromosome 1 of Burkholderia cepacia AMMD.</title>
        <authorList>
            <person name="Copeland A."/>
            <person name="Lucas S."/>
            <person name="Lapidus A."/>
            <person name="Barry K."/>
            <person name="Detter J.C."/>
            <person name="Glavina del Rio T."/>
            <person name="Hammon N."/>
            <person name="Israni S."/>
            <person name="Pitluck S."/>
            <person name="Bruce D."/>
            <person name="Chain P."/>
            <person name="Malfatti S."/>
            <person name="Shin M."/>
            <person name="Vergez L."/>
            <person name="Schmutz J."/>
            <person name="Larimer F."/>
            <person name="Land M."/>
            <person name="Hauser L."/>
            <person name="Kyrpides N."/>
            <person name="Kim E."/>
            <person name="Parke J."/>
            <person name="Coenye T."/>
            <person name="Konstantinidis K."/>
            <person name="Ramette A."/>
            <person name="Tiedje J."/>
            <person name="Richardson P."/>
        </authorList>
    </citation>
    <scope>NUCLEOTIDE SEQUENCE [LARGE SCALE GENOMIC DNA]</scope>
    <source>
        <strain>ATCC BAA-244 / DSM 16087 / CCUG 44356 / LMG 19182 / AMMD</strain>
    </source>
</reference>
<gene>
    <name evidence="1" type="primary">argS</name>
    <name type="ordered locus">Bamb_2968</name>
</gene>